<reference key="1">
    <citation type="journal article" date="2005" name="Proc. Natl. Acad. Sci. U.S.A.">
        <title>The complete genome sequence of Mycobacterium avium subspecies paratuberculosis.</title>
        <authorList>
            <person name="Li L."/>
            <person name="Bannantine J.P."/>
            <person name="Zhang Q."/>
            <person name="Amonsin A."/>
            <person name="May B.J."/>
            <person name="Alt D."/>
            <person name="Banerji N."/>
            <person name="Kanjilal S."/>
            <person name="Kapur V."/>
        </authorList>
    </citation>
    <scope>NUCLEOTIDE SEQUENCE [LARGE SCALE GENOMIC DNA]</scope>
    <source>
        <strain>ATCC BAA-968 / K-10</strain>
    </source>
</reference>
<feature type="chain" id="PRO_0000179594" description="ATP-dependent Clp protease proteolytic subunit 1">
    <location>
        <begin position="1"/>
        <end position="211"/>
    </location>
</feature>
<feature type="active site" description="Nucleophile" evidence="1">
    <location>
        <position position="107"/>
    </location>
</feature>
<feature type="active site" evidence="1">
    <location>
        <position position="132"/>
    </location>
</feature>
<keyword id="KW-0963">Cytoplasm</keyword>
<keyword id="KW-0378">Hydrolase</keyword>
<keyword id="KW-0645">Protease</keyword>
<keyword id="KW-1185">Reference proteome</keyword>
<keyword id="KW-0720">Serine protease</keyword>
<comment type="function">
    <text evidence="1">Cleaves peptides in various proteins in a process that requires ATP hydrolysis. Has a chymotrypsin-like activity. Plays a major role in the degradation of misfolded proteins.</text>
</comment>
<comment type="catalytic activity">
    <reaction evidence="1">
        <text>Hydrolysis of proteins to small peptides in the presence of ATP and magnesium. alpha-casein is the usual test substrate. In the absence of ATP, only oligopeptides shorter than five residues are hydrolyzed (such as succinyl-Leu-Tyr-|-NHMec, and Leu-Tyr-Leu-|-Tyr-Trp, in which cleavage of the -Tyr-|-Leu- and -Tyr-|-Trp bonds also occurs).</text>
        <dbReference type="EC" id="3.4.21.92"/>
    </reaction>
</comment>
<comment type="subunit">
    <text evidence="1">Fourteen ClpP subunits assemble into 2 heptameric rings which stack back to back to give a disk-like structure with a central cavity, resembling the structure of eukaryotic proteasomes.</text>
</comment>
<comment type="subcellular location">
    <subcellularLocation>
        <location evidence="1">Cytoplasm</location>
    </subcellularLocation>
</comment>
<comment type="similarity">
    <text evidence="1">Belongs to the peptidase S14 family.</text>
</comment>
<protein>
    <recommendedName>
        <fullName evidence="1">ATP-dependent Clp protease proteolytic subunit 1</fullName>
        <ecNumber evidence="1">3.4.21.92</ecNumber>
    </recommendedName>
    <alternativeName>
        <fullName evidence="1">Endopeptidase Clp 1</fullName>
    </alternativeName>
</protein>
<gene>
    <name evidence="1" type="primary">clpP1</name>
    <name type="ordered locus">MAP_2280c</name>
</gene>
<evidence type="ECO:0000255" key="1">
    <source>
        <dbReference type="HAMAP-Rule" id="MF_00444"/>
    </source>
</evidence>
<dbReference type="EC" id="3.4.21.92" evidence="1"/>
<dbReference type="EMBL" id="AE016958">
    <property type="protein sequence ID" value="AAS04597.1"/>
    <property type="molecule type" value="Genomic_DNA"/>
</dbReference>
<dbReference type="SMR" id="Q73XM9"/>
<dbReference type="STRING" id="262316.MAP_2280c"/>
<dbReference type="MEROPS" id="S14.009"/>
<dbReference type="KEGG" id="mpa:MAP_2280c"/>
<dbReference type="eggNOG" id="COG0740">
    <property type="taxonomic scope" value="Bacteria"/>
</dbReference>
<dbReference type="HOGENOM" id="CLU_058707_3_2_11"/>
<dbReference type="Proteomes" id="UP000000580">
    <property type="component" value="Chromosome"/>
</dbReference>
<dbReference type="GO" id="GO:0005737">
    <property type="term" value="C:cytoplasm"/>
    <property type="evidence" value="ECO:0007669"/>
    <property type="project" value="UniProtKB-SubCell"/>
</dbReference>
<dbReference type="GO" id="GO:0009368">
    <property type="term" value="C:endopeptidase Clp complex"/>
    <property type="evidence" value="ECO:0007669"/>
    <property type="project" value="TreeGrafter"/>
</dbReference>
<dbReference type="GO" id="GO:0004176">
    <property type="term" value="F:ATP-dependent peptidase activity"/>
    <property type="evidence" value="ECO:0007669"/>
    <property type="project" value="InterPro"/>
</dbReference>
<dbReference type="GO" id="GO:0051117">
    <property type="term" value="F:ATPase binding"/>
    <property type="evidence" value="ECO:0007669"/>
    <property type="project" value="TreeGrafter"/>
</dbReference>
<dbReference type="GO" id="GO:0004252">
    <property type="term" value="F:serine-type endopeptidase activity"/>
    <property type="evidence" value="ECO:0007669"/>
    <property type="project" value="UniProtKB-UniRule"/>
</dbReference>
<dbReference type="GO" id="GO:0006515">
    <property type="term" value="P:protein quality control for misfolded or incompletely synthesized proteins"/>
    <property type="evidence" value="ECO:0007669"/>
    <property type="project" value="TreeGrafter"/>
</dbReference>
<dbReference type="CDD" id="cd07017">
    <property type="entry name" value="S14_ClpP_2"/>
    <property type="match status" value="1"/>
</dbReference>
<dbReference type="FunFam" id="3.90.226.10:FF:000002">
    <property type="entry name" value="ATP-dependent Clp protease proteolytic subunit"/>
    <property type="match status" value="1"/>
</dbReference>
<dbReference type="Gene3D" id="3.90.226.10">
    <property type="entry name" value="2-enoyl-CoA Hydratase, Chain A, domain 1"/>
    <property type="match status" value="1"/>
</dbReference>
<dbReference type="HAMAP" id="MF_00444">
    <property type="entry name" value="ClpP"/>
    <property type="match status" value="1"/>
</dbReference>
<dbReference type="InterPro" id="IPR001907">
    <property type="entry name" value="ClpP"/>
</dbReference>
<dbReference type="InterPro" id="IPR029045">
    <property type="entry name" value="ClpP/crotonase-like_dom_sf"/>
</dbReference>
<dbReference type="InterPro" id="IPR023562">
    <property type="entry name" value="ClpP/TepA"/>
</dbReference>
<dbReference type="InterPro" id="IPR033135">
    <property type="entry name" value="ClpP_His_AS"/>
</dbReference>
<dbReference type="InterPro" id="IPR018215">
    <property type="entry name" value="ClpP_Ser_AS"/>
</dbReference>
<dbReference type="NCBIfam" id="NF001368">
    <property type="entry name" value="PRK00277.1"/>
    <property type="match status" value="1"/>
</dbReference>
<dbReference type="NCBIfam" id="NF009205">
    <property type="entry name" value="PRK12553.1"/>
    <property type="match status" value="1"/>
</dbReference>
<dbReference type="PANTHER" id="PTHR10381">
    <property type="entry name" value="ATP-DEPENDENT CLP PROTEASE PROTEOLYTIC SUBUNIT"/>
    <property type="match status" value="1"/>
</dbReference>
<dbReference type="PANTHER" id="PTHR10381:SF26">
    <property type="entry name" value="ATP-DEPENDENT CLP PROTEASE PROTEOLYTIC SUBUNIT-LIKE-RELATED"/>
    <property type="match status" value="1"/>
</dbReference>
<dbReference type="Pfam" id="PF00574">
    <property type="entry name" value="CLP_protease"/>
    <property type="match status" value="1"/>
</dbReference>
<dbReference type="PRINTS" id="PR00127">
    <property type="entry name" value="CLPPROTEASEP"/>
</dbReference>
<dbReference type="SUPFAM" id="SSF52096">
    <property type="entry name" value="ClpP/crotonase"/>
    <property type="match status" value="1"/>
</dbReference>
<dbReference type="PROSITE" id="PS00382">
    <property type="entry name" value="CLP_PROTEASE_HIS"/>
    <property type="match status" value="1"/>
</dbReference>
<dbReference type="PROSITE" id="PS00381">
    <property type="entry name" value="CLP_PROTEASE_SER"/>
    <property type="match status" value="1"/>
</dbReference>
<organism>
    <name type="scientific">Mycolicibacterium paratuberculosis (strain ATCC BAA-968 / K-10)</name>
    <name type="common">Mycobacterium paratuberculosis</name>
    <dbReference type="NCBI Taxonomy" id="262316"/>
    <lineage>
        <taxon>Bacteria</taxon>
        <taxon>Bacillati</taxon>
        <taxon>Actinomycetota</taxon>
        <taxon>Actinomycetes</taxon>
        <taxon>Mycobacteriales</taxon>
        <taxon>Mycobacteriaceae</taxon>
        <taxon>Mycobacterium</taxon>
        <taxon>Mycobacterium avium complex (MAC)</taxon>
    </lineage>
</organism>
<name>CLPP1_MYCPA</name>
<proteinExistence type="inferred from homology"/>
<accession>Q73XM9</accession>
<sequence>MNPQIQPQARYILPSFIEHSSFGIKESNPYNKLFEERIIFLGVQVDDASANDIMAQLLVLESLDPDRDITMYINSPGGGFTSLMAIYDTMQYVRADIQTVCLGQAASAAAVLLAAGTPGKRMALPNARVLIHQPSLQGVIQGQFSDLEIQAAEIERMRTLMETTLARHTGKDAATIRKDTDRDKILTAEEAKDYGIIDTVLEYRKLSAQTA</sequence>